<gene>
    <name evidence="1" type="primary">hisD</name>
    <name type="ordered locus">LBF_1772</name>
</gene>
<name>HISX_LEPBA</name>
<evidence type="ECO:0000255" key="1">
    <source>
        <dbReference type="HAMAP-Rule" id="MF_01024"/>
    </source>
</evidence>
<accession>B0S9F2</accession>
<keyword id="KW-0028">Amino-acid biosynthesis</keyword>
<keyword id="KW-0368">Histidine biosynthesis</keyword>
<keyword id="KW-0479">Metal-binding</keyword>
<keyword id="KW-0520">NAD</keyword>
<keyword id="KW-0560">Oxidoreductase</keyword>
<keyword id="KW-0862">Zinc</keyword>
<dbReference type="EC" id="1.1.1.23" evidence="1"/>
<dbReference type="EMBL" id="CP000777">
    <property type="protein sequence ID" value="ABZ94279.1"/>
    <property type="molecule type" value="Genomic_DNA"/>
</dbReference>
<dbReference type="RefSeq" id="WP_012388809.1">
    <property type="nucleotide sequence ID" value="NC_010842.1"/>
</dbReference>
<dbReference type="SMR" id="B0S9F2"/>
<dbReference type="KEGG" id="lbf:LBF_1772"/>
<dbReference type="HOGENOM" id="CLU_006732_3_0_12"/>
<dbReference type="UniPathway" id="UPA00031">
    <property type="reaction ID" value="UER00014"/>
</dbReference>
<dbReference type="GO" id="GO:0005829">
    <property type="term" value="C:cytosol"/>
    <property type="evidence" value="ECO:0007669"/>
    <property type="project" value="TreeGrafter"/>
</dbReference>
<dbReference type="GO" id="GO:0004399">
    <property type="term" value="F:histidinol dehydrogenase activity"/>
    <property type="evidence" value="ECO:0007669"/>
    <property type="project" value="UniProtKB-UniRule"/>
</dbReference>
<dbReference type="GO" id="GO:0051287">
    <property type="term" value="F:NAD binding"/>
    <property type="evidence" value="ECO:0007669"/>
    <property type="project" value="InterPro"/>
</dbReference>
<dbReference type="GO" id="GO:0008270">
    <property type="term" value="F:zinc ion binding"/>
    <property type="evidence" value="ECO:0007669"/>
    <property type="project" value="UniProtKB-UniRule"/>
</dbReference>
<dbReference type="GO" id="GO:0000105">
    <property type="term" value="P:L-histidine biosynthetic process"/>
    <property type="evidence" value="ECO:0007669"/>
    <property type="project" value="UniProtKB-UniRule"/>
</dbReference>
<dbReference type="CDD" id="cd06572">
    <property type="entry name" value="Histidinol_dh"/>
    <property type="match status" value="1"/>
</dbReference>
<dbReference type="FunFam" id="3.40.50.1980:FF:000001">
    <property type="entry name" value="Histidinol dehydrogenase"/>
    <property type="match status" value="1"/>
</dbReference>
<dbReference type="Gene3D" id="1.20.5.1300">
    <property type="match status" value="1"/>
</dbReference>
<dbReference type="Gene3D" id="3.40.50.1980">
    <property type="entry name" value="Nitrogenase molybdenum iron protein domain"/>
    <property type="match status" value="2"/>
</dbReference>
<dbReference type="HAMAP" id="MF_01024">
    <property type="entry name" value="HisD"/>
    <property type="match status" value="1"/>
</dbReference>
<dbReference type="InterPro" id="IPR016161">
    <property type="entry name" value="Ald_DH/histidinol_DH"/>
</dbReference>
<dbReference type="InterPro" id="IPR001692">
    <property type="entry name" value="Histidinol_DH_CS"/>
</dbReference>
<dbReference type="InterPro" id="IPR022695">
    <property type="entry name" value="Histidinol_DH_monofunct"/>
</dbReference>
<dbReference type="InterPro" id="IPR012131">
    <property type="entry name" value="Hstdl_DH"/>
</dbReference>
<dbReference type="NCBIfam" id="TIGR00069">
    <property type="entry name" value="hisD"/>
    <property type="match status" value="1"/>
</dbReference>
<dbReference type="PANTHER" id="PTHR21256:SF2">
    <property type="entry name" value="HISTIDINE BIOSYNTHESIS TRIFUNCTIONAL PROTEIN"/>
    <property type="match status" value="1"/>
</dbReference>
<dbReference type="PANTHER" id="PTHR21256">
    <property type="entry name" value="HISTIDINOL DEHYDROGENASE HDH"/>
    <property type="match status" value="1"/>
</dbReference>
<dbReference type="Pfam" id="PF00815">
    <property type="entry name" value="Histidinol_dh"/>
    <property type="match status" value="1"/>
</dbReference>
<dbReference type="PIRSF" id="PIRSF000099">
    <property type="entry name" value="Histidinol_dh"/>
    <property type="match status" value="1"/>
</dbReference>
<dbReference type="PRINTS" id="PR00083">
    <property type="entry name" value="HOLDHDRGNASE"/>
</dbReference>
<dbReference type="SUPFAM" id="SSF53720">
    <property type="entry name" value="ALDH-like"/>
    <property type="match status" value="1"/>
</dbReference>
<dbReference type="PROSITE" id="PS00611">
    <property type="entry name" value="HISOL_DEHYDROGENASE"/>
    <property type="match status" value="1"/>
</dbReference>
<comment type="function">
    <text evidence="1">Catalyzes the sequential NAD-dependent oxidations of L-histidinol to L-histidinaldehyde and then to L-histidine.</text>
</comment>
<comment type="catalytic activity">
    <reaction evidence="1">
        <text>L-histidinol + 2 NAD(+) + H2O = L-histidine + 2 NADH + 3 H(+)</text>
        <dbReference type="Rhea" id="RHEA:20641"/>
        <dbReference type="ChEBI" id="CHEBI:15377"/>
        <dbReference type="ChEBI" id="CHEBI:15378"/>
        <dbReference type="ChEBI" id="CHEBI:57540"/>
        <dbReference type="ChEBI" id="CHEBI:57595"/>
        <dbReference type="ChEBI" id="CHEBI:57699"/>
        <dbReference type="ChEBI" id="CHEBI:57945"/>
        <dbReference type="EC" id="1.1.1.23"/>
    </reaction>
</comment>
<comment type="cofactor">
    <cofactor evidence="1">
        <name>Zn(2+)</name>
        <dbReference type="ChEBI" id="CHEBI:29105"/>
    </cofactor>
    <text evidence="1">Binds 1 zinc ion per subunit.</text>
</comment>
<comment type="pathway">
    <text evidence="1">Amino-acid biosynthesis; L-histidine biosynthesis; L-histidine from 5-phospho-alpha-D-ribose 1-diphosphate: step 9/9.</text>
</comment>
<comment type="similarity">
    <text evidence="1">Belongs to the histidinol dehydrogenase family.</text>
</comment>
<sequence length="430" mass="47347">MPIPILHCDRNSKELYSRFLQGAREDLTTATDRILPILESVRTQGDQALFSYTEMFDGIKLSQLTIDPKKIKTNVDEKTKEAFLRAKSNIEAFHMEQKRESWSKVIDGNRLGVKYTPIPSLAVYAPGGKALYPSSVLMGIIPAKIAGVPSIQLITPPQKDGIPEILVWLAQIMDIDRIVTVGGAQGIAAAAYGTESVPKSEFIVGPGNAYVAAAKSYLSGQGLIGIESPAGPSEVCIIADENANPKWIACDMLSQAEHGEDSSAILLTTDLTLAKRVSEELEIAFSERPKRLQMKQTAIYENSSILVFPTLDDCIWFSNELAPEHLEIQTKDYESVFAKIEHAGSVFLGPYSPVAMGDYISGTNHILPTARGSRIYSSLGVDTFLKRVTFQEVTKESLENLYPFVKLMSELEGLDEEHGTSVKVRTRQFQ</sequence>
<proteinExistence type="inferred from homology"/>
<feature type="chain" id="PRO_1000135438" description="Histidinol dehydrogenase">
    <location>
        <begin position="1"/>
        <end position="430"/>
    </location>
</feature>
<feature type="active site" description="Proton acceptor" evidence="1">
    <location>
        <position position="324"/>
    </location>
</feature>
<feature type="active site" description="Proton acceptor" evidence="1">
    <location>
        <position position="325"/>
    </location>
</feature>
<feature type="binding site" evidence="1">
    <location>
        <position position="124"/>
    </location>
    <ligand>
        <name>NAD(+)</name>
        <dbReference type="ChEBI" id="CHEBI:57540"/>
    </ligand>
</feature>
<feature type="binding site" evidence="1">
    <location>
        <position position="185"/>
    </location>
    <ligand>
        <name>NAD(+)</name>
        <dbReference type="ChEBI" id="CHEBI:57540"/>
    </ligand>
</feature>
<feature type="binding site" evidence="1">
    <location>
        <position position="208"/>
    </location>
    <ligand>
        <name>NAD(+)</name>
        <dbReference type="ChEBI" id="CHEBI:57540"/>
    </ligand>
</feature>
<feature type="binding site" evidence="1">
    <location>
        <position position="233"/>
    </location>
    <ligand>
        <name>substrate</name>
    </ligand>
</feature>
<feature type="binding site" evidence="1">
    <location>
        <position position="255"/>
    </location>
    <ligand>
        <name>substrate</name>
    </ligand>
</feature>
<feature type="binding site" evidence="1">
    <location>
        <position position="255"/>
    </location>
    <ligand>
        <name>Zn(2+)</name>
        <dbReference type="ChEBI" id="CHEBI:29105"/>
    </ligand>
</feature>
<feature type="binding site" evidence="1">
    <location>
        <position position="258"/>
    </location>
    <ligand>
        <name>substrate</name>
    </ligand>
</feature>
<feature type="binding site" evidence="1">
    <location>
        <position position="258"/>
    </location>
    <ligand>
        <name>Zn(2+)</name>
        <dbReference type="ChEBI" id="CHEBI:29105"/>
    </ligand>
</feature>
<feature type="binding site" evidence="1">
    <location>
        <position position="325"/>
    </location>
    <ligand>
        <name>substrate</name>
    </ligand>
</feature>
<feature type="binding site" evidence="1">
    <location>
        <position position="358"/>
    </location>
    <ligand>
        <name>substrate</name>
    </ligand>
</feature>
<feature type="binding site" evidence="1">
    <location>
        <position position="358"/>
    </location>
    <ligand>
        <name>Zn(2+)</name>
        <dbReference type="ChEBI" id="CHEBI:29105"/>
    </ligand>
</feature>
<feature type="binding site" evidence="1">
    <location>
        <position position="412"/>
    </location>
    <ligand>
        <name>substrate</name>
    </ligand>
</feature>
<feature type="binding site" evidence="1">
    <location>
        <position position="418"/>
    </location>
    <ligand>
        <name>substrate</name>
    </ligand>
</feature>
<feature type="binding site" evidence="1">
    <location>
        <position position="418"/>
    </location>
    <ligand>
        <name>Zn(2+)</name>
        <dbReference type="ChEBI" id="CHEBI:29105"/>
    </ligand>
</feature>
<protein>
    <recommendedName>
        <fullName evidence="1">Histidinol dehydrogenase</fullName>
        <shortName evidence="1">HDH</shortName>
        <ecNumber evidence="1">1.1.1.23</ecNumber>
    </recommendedName>
</protein>
<reference key="1">
    <citation type="journal article" date="2008" name="PLoS ONE">
        <title>Genome sequence of the saprophyte Leptospira biflexa provides insights into the evolution of Leptospira and the pathogenesis of leptospirosis.</title>
        <authorList>
            <person name="Picardeau M."/>
            <person name="Bulach D.M."/>
            <person name="Bouchier C."/>
            <person name="Zuerner R.L."/>
            <person name="Zidane N."/>
            <person name="Wilson P.J."/>
            <person name="Creno S."/>
            <person name="Kuczek E.S."/>
            <person name="Bommezzadri S."/>
            <person name="Davis J.C."/>
            <person name="McGrath A."/>
            <person name="Johnson M.J."/>
            <person name="Boursaux-Eude C."/>
            <person name="Seemann T."/>
            <person name="Rouy Z."/>
            <person name="Coppel R.L."/>
            <person name="Rood J.I."/>
            <person name="Lajus A."/>
            <person name="Davies J.K."/>
            <person name="Medigue C."/>
            <person name="Adler B."/>
        </authorList>
    </citation>
    <scope>NUCLEOTIDE SEQUENCE [LARGE SCALE GENOMIC DNA]</scope>
    <source>
        <strain>Patoc 1 / Ames</strain>
    </source>
</reference>
<organism>
    <name type="scientific">Leptospira biflexa serovar Patoc (strain Patoc 1 / Ames)</name>
    <dbReference type="NCBI Taxonomy" id="355278"/>
    <lineage>
        <taxon>Bacteria</taxon>
        <taxon>Pseudomonadati</taxon>
        <taxon>Spirochaetota</taxon>
        <taxon>Spirochaetia</taxon>
        <taxon>Leptospirales</taxon>
        <taxon>Leptospiraceae</taxon>
        <taxon>Leptospira</taxon>
    </lineage>
</organism>